<sequence>MSYSAADNLQDSFQRAMNFSGSPGAVSTSPTQSFMNTLPRRVSITKQPKALKPFSTGDMNILLLENVNATAIKIFKDQGYQVEFHKSSLPEDELIEKIKDVHAIGIRSKTRLTEKILQHARNLVCIGCFCIGTNQVDLKYAASKGIAVFNSPFSNSRSVAELVIGEIISLARQLGDRSIELHTGTWNKVAARCWEVRGKTLGIIGYGHIGSQLSVLAEAMGLHVLYYDIVTIMALGTARQVSTLDELLNKSDFVTLHVPATPETEKMLSAPQFAAMKDGAYVINASRGTVVDIPSLIQAVKANKIAGAALDVYPHEPAKNGEGSFNDELNSWTSELVSLPNIILTPHIGGSTEEAQSSIGIEVATALSKYINEGNSVGSVNFPEVSLKSLDYDQENTVRVLYIHRNVPGVLKTVNDILSDHNIEKQFSDSHGEIAYLMADISSVNQSEIKDIYEKLNQTSAKVSIRLLY</sequence>
<dbReference type="EC" id="1.1.1.95"/>
<dbReference type="EC" id="1.1.1.399" evidence="5"/>
<dbReference type="EMBL" id="Z37997">
    <property type="protein sequence ID" value="CAA86096.1"/>
    <property type="molecule type" value="Genomic_DNA"/>
</dbReference>
<dbReference type="EMBL" id="BK006942">
    <property type="protein sequence ID" value="DAA08476.1"/>
    <property type="molecule type" value="Genomic_DNA"/>
</dbReference>
<dbReference type="PIR" id="S48370">
    <property type="entry name" value="S48370"/>
</dbReference>
<dbReference type="RefSeq" id="NP_012191.1">
    <property type="nucleotide sequence ID" value="NM_001179424.1"/>
</dbReference>
<dbReference type="PDB" id="8PIN">
    <property type="method" value="X-ray"/>
    <property type="resolution" value="3.19 A"/>
    <property type="chains" value="A/B/C/D=46-469"/>
</dbReference>
<dbReference type="PDB" id="8PIO">
    <property type="method" value="X-ray"/>
    <property type="resolution" value="2.60 A"/>
    <property type="chains" value="A/B/C/F=1-469"/>
</dbReference>
<dbReference type="PDB" id="8PIR">
    <property type="method" value="X-ray"/>
    <property type="resolution" value="2.70 A"/>
    <property type="chains" value="A/B/C/F=1-469"/>
</dbReference>
<dbReference type="PDB" id="8PIS">
    <property type="method" value="X-ray"/>
    <property type="resolution" value="2.69 A"/>
    <property type="chains" value="A/B/C/D/E/F/G/H=1-469"/>
</dbReference>
<dbReference type="PDB" id="8Q2I">
    <property type="method" value="X-ray"/>
    <property type="resolution" value="2.51 A"/>
    <property type="chains" value="A/B/C/D/E/F/G/H=1-469"/>
</dbReference>
<dbReference type="PDBsum" id="8PIN"/>
<dbReference type="PDBsum" id="8PIO"/>
<dbReference type="PDBsum" id="8PIR"/>
<dbReference type="PDBsum" id="8PIS"/>
<dbReference type="PDBsum" id="8Q2I"/>
<dbReference type="SMR" id="P40510"/>
<dbReference type="BioGRID" id="34918">
    <property type="interactions" value="67"/>
</dbReference>
<dbReference type="ComplexPortal" id="CPX-9181">
    <property type="entry name" value="SESAME metabolic enzyme complex"/>
</dbReference>
<dbReference type="DIP" id="DIP-4483N"/>
<dbReference type="FunCoup" id="P40510">
    <property type="interactions" value="816"/>
</dbReference>
<dbReference type="IntAct" id="P40510">
    <property type="interactions" value="6"/>
</dbReference>
<dbReference type="MINT" id="P40510"/>
<dbReference type="STRING" id="4932.YIL074C"/>
<dbReference type="iPTMnet" id="P40510"/>
<dbReference type="PaxDb" id="4932-YIL074C"/>
<dbReference type="PeptideAtlas" id="P40510"/>
<dbReference type="EnsemblFungi" id="YIL074C_mRNA">
    <property type="protein sequence ID" value="YIL074C"/>
    <property type="gene ID" value="YIL074C"/>
</dbReference>
<dbReference type="GeneID" id="854736"/>
<dbReference type="KEGG" id="sce:YIL074C"/>
<dbReference type="AGR" id="SGD:S000001336"/>
<dbReference type="SGD" id="S000001336">
    <property type="gene designation" value="SER33"/>
</dbReference>
<dbReference type="VEuPathDB" id="FungiDB:YIL074C"/>
<dbReference type="eggNOG" id="KOG0068">
    <property type="taxonomic scope" value="Eukaryota"/>
</dbReference>
<dbReference type="GeneTree" id="ENSGT00940000176610"/>
<dbReference type="HOGENOM" id="CLU_019796_9_2_1"/>
<dbReference type="InParanoid" id="P40510"/>
<dbReference type="OMA" id="YVIGDGY"/>
<dbReference type="OrthoDB" id="1621027at2759"/>
<dbReference type="BioCyc" id="YEAST:YIL074C-MONOMER"/>
<dbReference type="UniPathway" id="UPA00135">
    <property type="reaction ID" value="UER00196"/>
</dbReference>
<dbReference type="BioGRID-ORCS" id="854736">
    <property type="hits" value="4 hits in 10 CRISPR screens"/>
</dbReference>
<dbReference type="PRO" id="PR:P40510"/>
<dbReference type="Proteomes" id="UP000002311">
    <property type="component" value="Chromosome IX"/>
</dbReference>
<dbReference type="RNAct" id="P40510">
    <property type="molecule type" value="protein"/>
</dbReference>
<dbReference type="GO" id="GO:0005737">
    <property type="term" value="C:cytoplasm"/>
    <property type="evidence" value="ECO:0007005"/>
    <property type="project" value="SGD"/>
</dbReference>
<dbReference type="GO" id="GO:0061759">
    <property type="term" value="F:alpha-ketoglutarate reductase activity"/>
    <property type="evidence" value="ECO:0000314"/>
    <property type="project" value="SGD"/>
</dbReference>
<dbReference type="GO" id="GO:0042802">
    <property type="term" value="F:identical protein binding"/>
    <property type="evidence" value="ECO:0000353"/>
    <property type="project" value="IntAct"/>
</dbReference>
<dbReference type="GO" id="GO:0051287">
    <property type="term" value="F:NAD binding"/>
    <property type="evidence" value="ECO:0007669"/>
    <property type="project" value="InterPro"/>
</dbReference>
<dbReference type="GO" id="GO:0004617">
    <property type="term" value="F:phosphoglycerate dehydrogenase activity"/>
    <property type="evidence" value="ECO:0000315"/>
    <property type="project" value="SGD"/>
</dbReference>
<dbReference type="GO" id="GO:0006564">
    <property type="term" value="P:L-serine biosynthetic process"/>
    <property type="evidence" value="ECO:0000315"/>
    <property type="project" value="SGD"/>
</dbReference>
<dbReference type="CDD" id="cd04901">
    <property type="entry name" value="ACT_3PGDH"/>
    <property type="match status" value="1"/>
</dbReference>
<dbReference type="CDD" id="cd12176">
    <property type="entry name" value="PGDH_3"/>
    <property type="match status" value="1"/>
</dbReference>
<dbReference type="FunFam" id="3.30.70.260:FF:000036">
    <property type="entry name" value="D-3-phosphoglycerate dehydrogenase"/>
    <property type="match status" value="1"/>
</dbReference>
<dbReference type="FunFam" id="3.40.50.720:FF:000041">
    <property type="entry name" value="D-3-phosphoglycerate dehydrogenase"/>
    <property type="match status" value="1"/>
</dbReference>
<dbReference type="Gene3D" id="3.30.70.260">
    <property type="match status" value="1"/>
</dbReference>
<dbReference type="Gene3D" id="3.40.50.720">
    <property type="entry name" value="NAD(P)-binding Rossmann-like Domain"/>
    <property type="match status" value="2"/>
</dbReference>
<dbReference type="InterPro" id="IPR045865">
    <property type="entry name" value="ACT-like_dom_sf"/>
</dbReference>
<dbReference type="InterPro" id="IPR002912">
    <property type="entry name" value="ACT_dom"/>
</dbReference>
<dbReference type="InterPro" id="IPR050857">
    <property type="entry name" value="D-2-hydroxyacid_DH"/>
</dbReference>
<dbReference type="InterPro" id="IPR006139">
    <property type="entry name" value="D-isomer_2_OHA_DH_cat_dom"/>
</dbReference>
<dbReference type="InterPro" id="IPR029753">
    <property type="entry name" value="D-isomer_DH_CS"/>
</dbReference>
<dbReference type="InterPro" id="IPR029752">
    <property type="entry name" value="D-isomer_DH_CS1"/>
</dbReference>
<dbReference type="InterPro" id="IPR006140">
    <property type="entry name" value="D-isomer_DH_NAD-bd"/>
</dbReference>
<dbReference type="InterPro" id="IPR036291">
    <property type="entry name" value="NAD(P)-bd_dom_sf"/>
</dbReference>
<dbReference type="NCBIfam" id="NF008759">
    <property type="entry name" value="PRK11790.1"/>
    <property type="match status" value="1"/>
</dbReference>
<dbReference type="PANTHER" id="PTHR42789">
    <property type="entry name" value="D-ISOMER SPECIFIC 2-HYDROXYACID DEHYDROGENASE FAMILY PROTEIN (AFU_ORTHOLOGUE AFUA_6G10090)"/>
    <property type="match status" value="1"/>
</dbReference>
<dbReference type="PANTHER" id="PTHR42789:SF1">
    <property type="entry name" value="D-ISOMER SPECIFIC 2-HYDROXYACID DEHYDROGENASE FAMILY PROTEIN (AFU_ORTHOLOGUE AFUA_6G10090)"/>
    <property type="match status" value="1"/>
</dbReference>
<dbReference type="Pfam" id="PF00389">
    <property type="entry name" value="2-Hacid_dh"/>
    <property type="match status" value="1"/>
</dbReference>
<dbReference type="Pfam" id="PF02826">
    <property type="entry name" value="2-Hacid_dh_C"/>
    <property type="match status" value="1"/>
</dbReference>
<dbReference type="SUPFAM" id="SSF55021">
    <property type="entry name" value="ACT-like"/>
    <property type="match status" value="1"/>
</dbReference>
<dbReference type="SUPFAM" id="SSF52283">
    <property type="entry name" value="Formate/glycerate dehydrogenase catalytic domain-like"/>
    <property type="match status" value="1"/>
</dbReference>
<dbReference type="SUPFAM" id="SSF51735">
    <property type="entry name" value="NAD(P)-binding Rossmann-fold domains"/>
    <property type="match status" value="1"/>
</dbReference>
<dbReference type="PROSITE" id="PS51671">
    <property type="entry name" value="ACT"/>
    <property type="match status" value="1"/>
</dbReference>
<dbReference type="PROSITE" id="PS00065">
    <property type="entry name" value="D_2_HYDROXYACID_DH_1"/>
    <property type="match status" value="1"/>
</dbReference>
<dbReference type="PROSITE" id="PS00670">
    <property type="entry name" value="D_2_HYDROXYACID_DH_2"/>
    <property type="match status" value="1"/>
</dbReference>
<dbReference type="PROSITE" id="PS00671">
    <property type="entry name" value="D_2_HYDROXYACID_DH_3"/>
    <property type="match status" value="1"/>
</dbReference>
<proteinExistence type="evidence at protein level"/>
<reference key="1">
    <citation type="journal article" date="1997" name="Nature">
        <title>The nucleotide sequence of Saccharomyces cerevisiae chromosome IX.</title>
        <authorList>
            <person name="Churcher C.M."/>
            <person name="Bowman S."/>
            <person name="Badcock K."/>
            <person name="Bankier A.T."/>
            <person name="Brown D."/>
            <person name="Chillingworth T."/>
            <person name="Connor R."/>
            <person name="Devlin K."/>
            <person name="Gentles S."/>
            <person name="Hamlin N."/>
            <person name="Harris D.E."/>
            <person name="Horsnell T."/>
            <person name="Hunt S."/>
            <person name="Jagels K."/>
            <person name="Jones M."/>
            <person name="Lye G."/>
            <person name="Moule S."/>
            <person name="Odell C."/>
            <person name="Pearson D."/>
            <person name="Rajandream M.A."/>
            <person name="Rice P."/>
            <person name="Rowley N."/>
            <person name="Skelton J."/>
            <person name="Smith V."/>
            <person name="Walsh S.V."/>
            <person name="Whitehead S."/>
            <person name="Barrell B.G."/>
        </authorList>
    </citation>
    <scope>NUCLEOTIDE SEQUENCE [LARGE SCALE GENOMIC DNA]</scope>
    <source>
        <strain>ATCC 204508 / S288c</strain>
    </source>
</reference>
<reference key="2">
    <citation type="journal article" date="2014" name="G3 (Bethesda)">
        <title>The reference genome sequence of Saccharomyces cerevisiae: Then and now.</title>
        <authorList>
            <person name="Engel S.R."/>
            <person name="Dietrich F.S."/>
            <person name="Fisk D.G."/>
            <person name="Binkley G."/>
            <person name="Balakrishnan R."/>
            <person name="Costanzo M.C."/>
            <person name="Dwight S.S."/>
            <person name="Hitz B.C."/>
            <person name="Karra K."/>
            <person name="Nash R.S."/>
            <person name="Weng S."/>
            <person name="Wong E.D."/>
            <person name="Lloyd P."/>
            <person name="Skrzypek M.S."/>
            <person name="Miyasato S.R."/>
            <person name="Simison M."/>
            <person name="Cherry J.M."/>
        </authorList>
    </citation>
    <scope>GENOME REANNOTATION</scope>
    <source>
        <strain>ATCC 204508 / S288c</strain>
    </source>
</reference>
<reference key="3">
    <citation type="journal article" date="2003" name="Nature">
        <title>Global analysis of protein expression in yeast.</title>
        <authorList>
            <person name="Ghaemmaghami S."/>
            <person name="Huh W.-K."/>
            <person name="Bower K."/>
            <person name="Howson R.W."/>
            <person name="Belle A."/>
            <person name="Dephoure N."/>
            <person name="O'Shea E.K."/>
            <person name="Weissman J.S."/>
        </authorList>
    </citation>
    <scope>LEVEL OF PROTEIN EXPRESSION [LARGE SCALE ANALYSIS]</scope>
</reference>
<reference key="4">
    <citation type="journal article" date="2005" name="Mol. Cell. Proteomics">
        <title>Quantitative phosphoproteomics applied to the yeast pheromone signaling pathway.</title>
        <authorList>
            <person name="Gruhler A."/>
            <person name="Olsen J.V."/>
            <person name="Mohammed S."/>
            <person name="Mortensen P."/>
            <person name="Faergeman N.J."/>
            <person name="Mann M."/>
            <person name="Jensen O.N."/>
        </authorList>
    </citation>
    <scope>ACETYLATION [LARGE SCALE ANALYSIS] AT SER-2</scope>
    <scope>PHOSPHORYLATION [LARGE SCALE ANALYSIS] AT SER-22</scope>
    <scope>CLEAVAGE OF INITIATOR METHIONINE [LARGE SCALE ANALYSIS]</scope>
    <scope>IDENTIFICATION BY MASS SPECTROMETRY [LARGE SCALE ANALYSIS]</scope>
    <source>
        <strain>YAL6B</strain>
    </source>
</reference>
<reference key="5">
    <citation type="journal article" date="2007" name="J. Proteome Res.">
        <title>Large-scale phosphorylation analysis of alpha-factor-arrested Saccharomyces cerevisiae.</title>
        <authorList>
            <person name="Li X."/>
            <person name="Gerber S.A."/>
            <person name="Rudner A.D."/>
            <person name="Beausoleil S.A."/>
            <person name="Haas W."/>
            <person name="Villen J."/>
            <person name="Elias J.E."/>
            <person name="Gygi S.P."/>
        </authorList>
    </citation>
    <scope>PHOSPHORYLATION [LARGE SCALE ANALYSIS] AT SER-22</scope>
    <scope>IDENTIFICATION BY MASS SPECTROMETRY [LARGE SCALE ANALYSIS]</scope>
    <source>
        <strain>ADR376</strain>
    </source>
</reference>
<reference key="6">
    <citation type="journal article" date="2008" name="Mol. Cell. Proteomics">
        <title>A multidimensional chromatography technology for in-depth phosphoproteome analysis.</title>
        <authorList>
            <person name="Albuquerque C.P."/>
            <person name="Smolka M.B."/>
            <person name="Payne S.H."/>
            <person name="Bafna V."/>
            <person name="Eng J."/>
            <person name="Zhou H."/>
        </authorList>
    </citation>
    <scope>IDENTIFICATION BY MASS SPECTROMETRY [LARGE SCALE ANALYSIS]</scope>
</reference>
<reference key="7">
    <citation type="journal article" date="2009" name="Science">
        <title>Global analysis of Cdk1 substrate phosphorylation sites provides insights into evolution.</title>
        <authorList>
            <person name="Holt L.J."/>
            <person name="Tuch B.B."/>
            <person name="Villen J."/>
            <person name="Johnson A.D."/>
            <person name="Gygi S.P."/>
            <person name="Morgan D.O."/>
        </authorList>
    </citation>
    <scope>PHOSPHORYLATION [LARGE SCALE ANALYSIS] AT SER-29 AND SER-33</scope>
    <scope>IDENTIFICATION BY MASS SPECTROMETRY [LARGE SCALE ANALYSIS]</scope>
</reference>
<reference key="8">
    <citation type="journal article" date="2012" name="Proc. Natl. Acad. Sci. U.S.A.">
        <title>N-terminal acetylome analyses and functional insights of the N-terminal acetyltransferase NatB.</title>
        <authorList>
            <person name="Van Damme P."/>
            <person name="Lasa M."/>
            <person name="Polevoda B."/>
            <person name="Gazquez C."/>
            <person name="Elosegui-Artola A."/>
            <person name="Kim D.S."/>
            <person name="De Juan-Pardo E."/>
            <person name="Demeyer K."/>
            <person name="Hole K."/>
            <person name="Larrea E."/>
            <person name="Timmerman E."/>
            <person name="Prieto J."/>
            <person name="Arnesen T."/>
            <person name="Sherman F."/>
            <person name="Gevaert K."/>
            <person name="Aldabe R."/>
        </authorList>
    </citation>
    <scope>ACETYLATION [LARGE SCALE ANALYSIS] AT SER-2</scope>
    <scope>CLEAVAGE OF INITIATOR METHIONINE [LARGE SCALE ANALYSIS]</scope>
    <scope>IDENTIFICATION BY MASS SPECTROMETRY [LARGE SCALE ANALYSIS]</scope>
</reference>
<reference key="9">
    <citation type="journal article" date="2016" name="J. Biol. Chem.">
        <title>Saccharomyces cerevisiae forms D-2-hydroxyglutarate and couples its degradation to D-lactate formation via a cytosolic transhydrogenase.</title>
        <authorList>
            <person name="Becker-Kettern J."/>
            <person name="Paczia N."/>
            <person name="Conrotte J.F."/>
            <person name="Kay D.P."/>
            <person name="Guignard C."/>
            <person name="Jung P.P."/>
            <person name="Linster C.L."/>
        </authorList>
    </citation>
    <scope>FUNCTION</scope>
    <scope>CATALYTIC ACTIVITY</scope>
    <scope>BIOPHYSICOCHEMICAL PROPERTIES</scope>
    <source>
        <strain>ATCC 201388 / BY4741</strain>
    </source>
</reference>
<name>SER33_YEAST</name>
<organism>
    <name type="scientific">Saccharomyces cerevisiae (strain ATCC 204508 / S288c)</name>
    <name type="common">Baker's yeast</name>
    <dbReference type="NCBI Taxonomy" id="559292"/>
    <lineage>
        <taxon>Eukaryota</taxon>
        <taxon>Fungi</taxon>
        <taxon>Dikarya</taxon>
        <taxon>Ascomycota</taxon>
        <taxon>Saccharomycotina</taxon>
        <taxon>Saccharomycetes</taxon>
        <taxon>Saccharomycetales</taxon>
        <taxon>Saccharomycetaceae</taxon>
        <taxon>Saccharomyces</taxon>
    </lineage>
</organism>
<evidence type="ECO:0000250" key="1"/>
<evidence type="ECO:0000250" key="2">
    <source>
        <dbReference type="UniProtKB" id="P0A9T0"/>
    </source>
</evidence>
<evidence type="ECO:0000255" key="3">
    <source>
        <dbReference type="PROSITE-ProRule" id="PRU01007"/>
    </source>
</evidence>
<evidence type="ECO:0000269" key="4">
    <source>
    </source>
</evidence>
<evidence type="ECO:0000269" key="5">
    <source>
    </source>
</evidence>
<evidence type="ECO:0000305" key="6"/>
<evidence type="ECO:0007744" key="7">
    <source>
    </source>
</evidence>
<evidence type="ECO:0007744" key="8">
    <source>
    </source>
</evidence>
<evidence type="ECO:0007744" key="9">
    <source>
    </source>
</evidence>
<evidence type="ECO:0007744" key="10">
    <source>
    </source>
</evidence>
<accession>P40510</accession>
<accession>D6VVL0</accession>
<comment type="function">
    <text evidence="5">Catalyzes the reversible oxidation of 3-phospho-D-glycerate to 3-phosphonooxypyruvate, the first step of the phosphorylated L-serine biosynthesis pathway. Also catalyzes the reversible oxidation of 2-hydroxyglutarate to 2-oxoglutarate.</text>
</comment>
<comment type="catalytic activity">
    <reaction>
        <text>(2R)-3-phosphoglycerate + NAD(+) = 3-phosphooxypyruvate + NADH + H(+)</text>
        <dbReference type="Rhea" id="RHEA:12641"/>
        <dbReference type="ChEBI" id="CHEBI:15378"/>
        <dbReference type="ChEBI" id="CHEBI:18110"/>
        <dbReference type="ChEBI" id="CHEBI:57540"/>
        <dbReference type="ChEBI" id="CHEBI:57945"/>
        <dbReference type="ChEBI" id="CHEBI:58272"/>
        <dbReference type="EC" id="1.1.1.95"/>
    </reaction>
</comment>
<comment type="catalytic activity">
    <reaction evidence="5">
        <text>(R)-2-hydroxyglutarate + NAD(+) = 2-oxoglutarate + NADH + H(+)</text>
        <dbReference type="Rhea" id="RHEA:49612"/>
        <dbReference type="ChEBI" id="CHEBI:15378"/>
        <dbReference type="ChEBI" id="CHEBI:15801"/>
        <dbReference type="ChEBI" id="CHEBI:16810"/>
        <dbReference type="ChEBI" id="CHEBI:57540"/>
        <dbReference type="ChEBI" id="CHEBI:57945"/>
        <dbReference type="EC" id="1.1.1.399"/>
    </reaction>
</comment>
<comment type="biophysicochemical properties">
    <kinetics>
        <KM evidence="5">54 uM for 2-oxoglutarate</KM>
        <text evidence="5">kcat is 0.25 sec(-1) for 2-oxoglutarate reduction.</text>
    </kinetics>
</comment>
<comment type="pathway">
    <text>Amino-acid biosynthesis; L-serine biosynthesis; L-serine from 3-phospho-D-glycerate: step 1/3.</text>
</comment>
<comment type="interaction">
    <interactant intactId="EBI-16821">
        <id>P40510</id>
    </interactant>
    <interactant intactId="EBI-16961">
        <id>P40054</id>
        <label>SER3</label>
    </interactant>
    <organismsDiffer>false</organismsDiffer>
    <experiments>6</experiments>
</comment>
<comment type="interaction">
    <interactant intactId="EBI-16821">
        <id>P40510</id>
    </interactant>
    <interactant intactId="EBI-16821">
        <id>P40510</id>
        <label>SER33</label>
    </interactant>
    <organismsDiffer>false</organismsDiffer>
    <experiments>3</experiments>
</comment>
<comment type="miscellaneous">
    <text evidence="4">Present with 2010 molecules/cell in log phase SD medium.</text>
</comment>
<comment type="similarity">
    <text evidence="6">Belongs to the D-isomer specific 2-hydroxyacid dehydrogenase family.</text>
</comment>
<keyword id="KW-0002">3D-structure</keyword>
<keyword id="KW-0007">Acetylation</keyword>
<keyword id="KW-0028">Amino-acid biosynthesis</keyword>
<keyword id="KW-0520">NAD</keyword>
<keyword id="KW-0560">Oxidoreductase</keyword>
<keyword id="KW-0597">Phosphoprotein</keyword>
<keyword id="KW-1185">Reference proteome</keyword>
<keyword id="KW-0718">Serine biosynthesis</keyword>
<gene>
    <name type="primary">SER33</name>
    <name type="ordered locus">YIL074C</name>
</gene>
<feature type="initiator methionine" description="Removed" evidence="7 10">
    <location>
        <position position="1"/>
    </location>
</feature>
<feature type="chain" id="PRO_0000076019" description="D-3-phosphoglycerate dehydrogenase 2">
    <location>
        <begin position="2"/>
        <end position="469"/>
    </location>
</feature>
<feature type="domain" description="ACT" evidence="3">
    <location>
        <begin position="399"/>
        <end position="469"/>
    </location>
</feature>
<feature type="active site" evidence="1">
    <location>
        <position position="287"/>
    </location>
</feature>
<feature type="active site" evidence="1">
    <location>
        <position position="316"/>
    </location>
</feature>
<feature type="active site" description="Proton donor" evidence="1">
    <location>
        <position position="347"/>
    </location>
</feature>
<feature type="binding site" evidence="2">
    <location>
        <begin position="208"/>
        <end position="209"/>
    </location>
    <ligand>
        <name>NAD(+)</name>
        <dbReference type="ChEBI" id="CHEBI:57540"/>
    </ligand>
</feature>
<feature type="binding site" evidence="2">
    <location>
        <position position="228"/>
    </location>
    <ligand>
        <name>NAD(+)</name>
        <dbReference type="ChEBI" id="CHEBI:57540"/>
    </ligand>
</feature>
<feature type="binding site" evidence="2">
    <location>
        <begin position="285"/>
        <end position="287"/>
    </location>
    <ligand>
        <name>NAD(+)</name>
        <dbReference type="ChEBI" id="CHEBI:57540"/>
    </ligand>
</feature>
<feature type="binding site" evidence="2">
    <location>
        <position position="311"/>
    </location>
    <ligand>
        <name>NAD(+)</name>
        <dbReference type="ChEBI" id="CHEBI:57540"/>
    </ligand>
</feature>
<feature type="binding site" evidence="2">
    <location>
        <begin position="347"/>
        <end position="350"/>
    </location>
    <ligand>
        <name>NAD(+)</name>
        <dbReference type="ChEBI" id="CHEBI:57540"/>
    </ligand>
</feature>
<feature type="modified residue" description="N-acetylserine" evidence="7 10">
    <location>
        <position position="2"/>
    </location>
</feature>
<feature type="modified residue" description="Phosphoserine" evidence="7 8">
    <location>
        <position position="22"/>
    </location>
</feature>
<feature type="modified residue" description="Phosphoserine" evidence="9">
    <location>
        <position position="29"/>
    </location>
</feature>
<feature type="modified residue" description="Phosphoserine" evidence="9">
    <location>
        <position position="33"/>
    </location>
</feature>
<protein>
    <recommendedName>
        <fullName>D-3-phosphoglycerate dehydrogenase 2</fullName>
        <shortName>3-PGDH 2</shortName>
        <ecNumber>1.1.1.95</ecNumber>
    </recommendedName>
    <alternativeName>
        <fullName evidence="6">2-oxoglutarate reductase</fullName>
        <ecNumber evidence="5">1.1.1.399</ecNumber>
    </alternativeName>
</protein>